<protein>
    <recommendedName>
        <fullName evidence="1">tRNA(Ile)-lysidine synthase</fullName>
        <ecNumber evidence="1">6.3.4.19</ecNumber>
    </recommendedName>
    <alternativeName>
        <fullName evidence="1">tRNA(Ile)-2-lysyl-cytidine synthase</fullName>
    </alternativeName>
    <alternativeName>
        <fullName evidence="1">tRNA(Ile)-lysidine synthetase</fullName>
    </alternativeName>
</protein>
<keyword id="KW-0067">ATP-binding</keyword>
<keyword id="KW-0963">Cytoplasm</keyword>
<keyword id="KW-0436">Ligase</keyword>
<keyword id="KW-0547">Nucleotide-binding</keyword>
<keyword id="KW-0819">tRNA processing</keyword>
<gene>
    <name evidence="1" type="primary">tilS</name>
    <name type="ordered locus">Pmob_0872</name>
</gene>
<accession>A9BJK2</accession>
<evidence type="ECO:0000255" key="1">
    <source>
        <dbReference type="HAMAP-Rule" id="MF_01161"/>
    </source>
</evidence>
<organism>
    <name type="scientific">Petrotoga mobilis (strain DSM 10674 / SJ95)</name>
    <dbReference type="NCBI Taxonomy" id="403833"/>
    <lineage>
        <taxon>Bacteria</taxon>
        <taxon>Thermotogati</taxon>
        <taxon>Thermotogota</taxon>
        <taxon>Thermotogae</taxon>
        <taxon>Petrotogales</taxon>
        <taxon>Petrotogaceae</taxon>
        <taxon>Petrotoga</taxon>
    </lineage>
</organism>
<feature type="chain" id="PRO_1000085367" description="tRNA(Ile)-lysidine synthase">
    <location>
        <begin position="1"/>
        <end position="311"/>
    </location>
</feature>
<feature type="binding site" evidence="1">
    <location>
        <begin position="31"/>
        <end position="36"/>
    </location>
    <ligand>
        <name>ATP</name>
        <dbReference type="ChEBI" id="CHEBI:30616"/>
    </ligand>
</feature>
<reference key="1">
    <citation type="submission" date="2007-11" db="EMBL/GenBank/DDBJ databases">
        <title>Complete sequence of Petroga mobilis SJ95.</title>
        <authorList>
            <consortium name="US DOE Joint Genome Institute"/>
            <person name="Copeland A."/>
            <person name="Lucas S."/>
            <person name="Lapidus A."/>
            <person name="Barry K."/>
            <person name="Glavina del Rio T."/>
            <person name="Dalin E."/>
            <person name="Tice H."/>
            <person name="Pitluck S."/>
            <person name="Meincke L."/>
            <person name="Brettin T."/>
            <person name="Bruce D."/>
            <person name="Detter J.C."/>
            <person name="Han C."/>
            <person name="Kuske C.R."/>
            <person name="Schmutz J."/>
            <person name="Larimer F."/>
            <person name="Land M."/>
            <person name="Hauser L."/>
            <person name="Kyrpides N."/>
            <person name="Mikhailova N."/>
            <person name="Noll K."/>
            <person name="Richardson P."/>
        </authorList>
    </citation>
    <scope>NUCLEOTIDE SEQUENCE [LARGE SCALE GENOMIC DNA]</scope>
    <source>
        <strain>DSM 10674 / SJ95</strain>
    </source>
</reference>
<sequence length="311" mass="36881">MILQDFEKKIFKFIRDYKIFNKYDKILLGVSGGKDSMSLLHVMSKLSKTMGFEISVAHLNHCMREEADNDEAFVRQACWKLKIPFFSKKVDVFTYSKKNKVGVEVAGRKLRYEFFYETLRRLSYNKIATAHHMDDLFETMIYRILRGTGIYGLGGLIPIEEEITKPMLCVDLEEIKNYVTINNIEYVEDKYNYSLDYARNKIRYEITPLFKKINPRYKESFFRLAKIIWSYREEVKRKFEERSEISKDSLKLRLENDFFDGEIIRIAFLKFGKYPPNMEETEKIIKMRKGGVRKINGLSITKKSDSLLVKI</sequence>
<dbReference type="EC" id="6.3.4.19" evidence="1"/>
<dbReference type="EMBL" id="CP000879">
    <property type="protein sequence ID" value="ABX31595.1"/>
    <property type="molecule type" value="Genomic_DNA"/>
</dbReference>
<dbReference type="RefSeq" id="WP_012208698.1">
    <property type="nucleotide sequence ID" value="NC_010003.1"/>
</dbReference>
<dbReference type="SMR" id="A9BJK2"/>
<dbReference type="STRING" id="403833.Pmob_0872"/>
<dbReference type="KEGG" id="pmo:Pmob_0872"/>
<dbReference type="eggNOG" id="COG0037">
    <property type="taxonomic scope" value="Bacteria"/>
</dbReference>
<dbReference type="HOGENOM" id="CLU_018869_0_0_0"/>
<dbReference type="OrthoDB" id="9807403at2"/>
<dbReference type="Proteomes" id="UP000000789">
    <property type="component" value="Chromosome"/>
</dbReference>
<dbReference type="GO" id="GO:0005737">
    <property type="term" value="C:cytoplasm"/>
    <property type="evidence" value="ECO:0007669"/>
    <property type="project" value="UniProtKB-SubCell"/>
</dbReference>
<dbReference type="GO" id="GO:0005524">
    <property type="term" value="F:ATP binding"/>
    <property type="evidence" value="ECO:0007669"/>
    <property type="project" value="UniProtKB-UniRule"/>
</dbReference>
<dbReference type="GO" id="GO:0032267">
    <property type="term" value="F:tRNA(Ile)-lysidine synthase activity"/>
    <property type="evidence" value="ECO:0007669"/>
    <property type="project" value="UniProtKB-EC"/>
</dbReference>
<dbReference type="GO" id="GO:0006400">
    <property type="term" value="P:tRNA modification"/>
    <property type="evidence" value="ECO:0007669"/>
    <property type="project" value="UniProtKB-UniRule"/>
</dbReference>
<dbReference type="CDD" id="cd01992">
    <property type="entry name" value="TilS_N"/>
    <property type="match status" value="1"/>
</dbReference>
<dbReference type="Gene3D" id="3.40.50.620">
    <property type="entry name" value="HUPs"/>
    <property type="match status" value="1"/>
</dbReference>
<dbReference type="HAMAP" id="MF_01161">
    <property type="entry name" value="tRNA_Ile_lys_synt"/>
    <property type="match status" value="1"/>
</dbReference>
<dbReference type="InterPro" id="IPR014729">
    <property type="entry name" value="Rossmann-like_a/b/a_fold"/>
</dbReference>
<dbReference type="InterPro" id="IPR011063">
    <property type="entry name" value="TilS/TtcA_N"/>
</dbReference>
<dbReference type="InterPro" id="IPR012094">
    <property type="entry name" value="tRNA_Ile_lys_synt"/>
</dbReference>
<dbReference type="InterPro" id="IPR012795">
    <property type="entry name" value="tRNA_Ile_lys_synt_N"/>
</dbReference>
<dbReference type="NCBIfam" id="TIGR02432">
    <property type="entry name" value="lysidine_TilS_N"/>
    <property type="match status" value="1"/>
</dbReference>
<dbReference type="PANTHER" id="PTHR43033">
    <property type="entry name" value="TRNA(ILE)-LYSIDINE SYNTHASE-RELATED"/>
    <property type="match status" value="1"/>
</dbReference>
<dbReference type="PANTHER" id="PTHR43033:SF1">
    <property type="entry name" value="TRNA(ILE)-LYSIDINE SYNTHASE-RELATED"/>
    <property type="match status" value="1"/>
</dbReference>
<dbReference type="Pfam" id="PF01171">
    <property type="entry name" value="ATP_bind_3"/>
    <property type="match status" value="1"/>
</dbReference>
<dbReference type="SUPFAM" id="SSF52402">
    <property type="entry name" value="Adenine nucleotide alpha hydrolases-like"/>
    <property type="match status" value="1"/>
</dbReference>
<name>TILS_PETMO</name>
<comment type="function">
    <text evidence="1">Ligates lysine onto the cytidine present at position 34 of the AUA codon-specific tRNA(Ile) that contains the anticodon CAU, in an ATP-dependent manner. Cytidine is converted to lysidine, thus changing the amino acid specificity of the tRNA from methionine to isoleucine.</text>
</comment>
<comment type="catalytic activity">
    <reaction evidence="1">
        <text>cytidine(34) in tRNA(Ile2) + L-lysine + ATP = lysidine(34) in tRNA(Ile2) + AMP + diphosphate + H(+)</text>
        <dbReference type="Rhea" id="RHEA:43744"/>
        <dbReference type="Rhea" id="RHEA-COMP:10625"/>
        <dbReference type="Rhea" id="RHEA-COMP:10670"/>
        <dbReference type="ChEBI" id="CHEBI:15378"/>
        <dbReference type="ChEBI" id="CHEBI:30616"/>
        <dbReference type="ChEBI" id="CHEBI:32551"/>
        <dbReference type="ChEBI" id="CHEBI:33019"/>
        <dbReference type="ChEBI" id="CHEBI:82748"/>
        <dbReference type="ChEBI" id="CHEBI:83665"/>
        <dbReference type="ChEBI" id="CHEBI:456215"/>
        <dbReference type="EC" id="6.3.4.19"/>
    </reaction>
</comment>
<comment type="subcellular location">
    <subcellularLocation>
        <location evidence="1">Cytoplasm</location>
    </subcellularLocation>
</comment>
<comment type="domain">
    <text>The N-terminal region contains the highly conserved SGGXDS motif, predicted to be a P-loop motif involved in ATP binding.</text>
</comment>
<comment type="similarity">
    <text evidence="1">Belongs to the tRNA(Ile)-lysidine synthase family.</text>
</comment>
<proteinExistence type="inferred from homology"/>